<name>NCAP_PUUMP</name>
<accession>P41270</accession>
<sequence>MSDLTDIQEEITRHEQQLVVARQKLKDAERAVEVYPDDVNKNTLQARQQTVSALEDKLADYKRRMADAVSRKKMDTKPTDPTGIEPDDHLKERSSLRYGNVLDVNAIDIEEPSGQTADWYTIGVYVIGFTIPIILKALYMLSTRGRQTVKENKGTRIRFKDDTSFEDINGIRRPKHLYVSMPTAQSTMKAEELTPGRFRTIVCGLFPTQIQVRNIMSPVMGVIGFSFFVKDWPEKIREFMEKECPFIKPEVKPGTPAQEVEFLKRNRVYFMTRQDVLDKNHVADIDKLIDYAASGDPTSPDDIESPNAPWVFACAPDRCPPTCIYVAGMAELGAFFSILQDMRNTIMASKTVGTAEEKLKKKSSFYQSYLRRTQSMGIQLDQRIILLYMLEWGKEMVDHFHLGDDMDPELRGLAQSLIDQKVKEISNQEPLKI</sequence>
<feature type="chain" id="PRO_0000222015" description="Nucleoprotein">
    <location>
        <begin position="1"/>
        <end position="433"/>
    </location>
</feature>
<feature type="region of interest" description="Viral panhandle binding" evidence="5">
    <location>
        <begin position="1"/>
        <end position="175"/>
    </location>
</feature>
<feature type="region of interest" description="Chaperone activity" evidence="5">
    <location>
        <begin position="1"/>
        <end position="100"/>
    </location>
</feature>
<feature type="region of interest" description="Homomultimerization" evidence="4">
    <location>
        <begin position="1"/>
        <end position="79"/>
    </location>
</feature>
<feature type="region of interest" description="RdRP binding" evidence="5">
    <location>
        <begin position="1"/>
        <end position="50"/>
    </location>
</feature>
<feature type="region of interest" description="Disordered" evidence="7">
    <location>
        <begin position="69"/>
        <end position="90"/>
    </location>
</feature>
<feature type="region of interest" description="Interaction with glycoprotein N" evidence="4">
    <location>
        <begin position="80"/>
        <end position="248"/>
    </location>
</feature>
<feature type="region of interest" description="Homomultimerization" evidence="2">
    <location>
        <begin position="100"/>
        <end position="125"/>
    </location>
</feature>
<feature type="region of interest" description="Interaction with host RPS19" evidence="5">
    <location>
        <begin position="150"/>
        <end position="175"/>
    </location>
</feature>
<feature type="region of interest" description="Viral RNA-binding" evidence="2">
    <location>
        <begin position="175"/>
        <end position="217"/>
    </location>
</feature>
<feature type="region of interest" description="Interaction with host UBE2I/UBC9" evidence="2">
    <location>
        <begin position="188"/>
        <end position="191"/>
    </location>
</feature>
<feature type="region of interest" description="Interaction with host DAXX" evidence="3">
    <location>
        <begin position="377"/>
        <end position="433"/>
    </location>
</feature>
<feature type="region of interest" description="Homomultimerization" evidence="4">
    <location>
        <begin position="377"/>
        <end position="425"/>
    </location>
</feature>
<feature type="coiled-coil region" evidence="6">
    <location>
        <begin position="4"/>
        <end position="71"/>
    </location>
</feature>
<feature type="short sequence motif" description="YxxL" evidence="2">
    <location>
        <begin position="178"/>
        <end position="181"/>
    </location>
</feature>
<feature type="compositionally biased region" description="Basic and acidic residues" evidence="7">
    <location>
        <begin position="69"/>
        <end position="78"/>
    </location>
</feature>
<feature type="site" description="Important for the endonuclease activity" evidence="5">
    <location>
        <position position="88"/>
    </location>
</feature>
<feature type="site" description="Important for the endonuclease activity" evidence="5">
    <location>
        <position position="103"/>
    </location>
</feature>
<evidence type="ECO:0000250" key="1">
    <source>
        <dbReference type="UniProtKB" id="O36307"/>
    </source>
</evidence>
<evidence type="ECO:0000250" key="2">
    <source>
        <dbReference type="UniProtKB" id="P05133"/>
    </source>
</evidence>
<evidence type="ECO:0000250" key="3">
    <source>
        <dbReference type="UniProtKB" id="P27313"/>
    </source>
</evidence>
<evidence type="ECO:0000250" key="4">
    <source>
        <dbReference type="UniProtKB" id="Q88918"/>
    </source>
</evidence>
<evidence type="ECO:0000250" key="5">
    <source>
        <dbReference type="UniProtKB" id="Q89462"/>
    </source>
</evidence>
<evidence type="ECO:0000255" key="6"/>
<evidence type="ECO:0000256" key="7">
    <source>
        <dbReference type="SAM" id="MobiDB-lite"/>
    </source>
</evidence>
<evidence type="ECO:0000305" key="8"/>
<organism>
    <name type="scientific">Puumala virus (strain P360)</name>
    <dbReference type="NCBI Taxonomy" id="39001"/>
    <lineage>
        <taxon>Viruses</taxon>
        <taxon>Riboviria</taxon>
        <taxon>Orthornavirae</taxon>
        <taxon>Negarnaviricota</taxon>
        <taxon>Polyploviricotina</taxon>
        <taxon>Ellioviricetes</taxon>
        <taxon>Bunyavirales</taxon>
        <taxon>Hantaviridae</taxon>
        <taxon>Mammantavirinae</taxon>
        <taxon>Orthohantavirus</taxon>
        <taxon>Orthohantavirus puumalaense</taxon>
    </lineage>
</organism>
<organismHost>
    <name type="scientific">Homo sapiens</name>
    <name type="common">Human</name>
    <dbReference type="NCBI Taxonomy" id="9606"/>
</organismHost>
<organismHost>
    <name type="scientific">Myodes glareolus</name>
    <name type="common">Bank vole</name>
    <name type="synonym">Clethrionomys glareolus</name>
    <dbReference type="NCBI Taxonomy" id="447135"/>
</organismHost>
<comment type="function">
    <text evidence="1 2 5 8">Encapsidates the genome protecting it from nucleases (Probable). The encapsidated genomic RNA is termed the nucleocapsid (NC) and serves as template for transcription and replication (Probable). The nucleocapsid has a left-handed helical structure (By similarity). As a trimer, specifically binds and acts as a chaperone to unwind the panhandle structure formed by the viral RNA (vRNA) termini (By similarity). Involved in the transcription and replication initiation of vRNA by mediating primer annealing (By similarity). Plays a role in cap snatching by sequestering capped RNAs in P bodies for use by the viral RdRp during transcription initiation (By similarity). Substitutes for the cellular cap-binding complex (eIF4F) to preferentially facilitate the translation of capped mRNAs (By similarity). Initiates the translation by specifically binding to the cap and 40S ribosomal subunit (By similarity). Prevents the viral glycoprotein N (Gn) from autophagy-dependent breakdown maybe by blocking autophagosome formation (By similarity). Inhibits host EIF2AK2/PKR dimerization to prevent PKR-induced translational shutdown in cells and thus the activation of the antiviral state (By similarity). Also displays sequence-unspecific DNA endonuclease activity (By similarity).</text>
</comment>
<comment type="subunit">
    <text evidence="2 3 4 5">Homotrimer (By similarity). Homomultimer (By similarity). Homomultimerizes and binds to viral genomic RNA to form the nucleocapsid (By similarity). Interacts with host MAP1LC3B; this interaction participates to the protection of Gn from virus-triggered autophagy (By similarity). Interacts with host SNAP29; this interaction participates to the protection of glycoprotein N from virus-triggered autophagy (By similarity). Interacts (via N-terminus) with host RPS19; this interaction probably mediates the loading of the 40S ribosomal subunit on viral capped mRNA during N-mediated translation initiation (By similarity). Interacts with the viral RdRp (By similarity). Interacts with host SUMO1 (via N-terminus) (By similarity). Interacts with host DAXX (By similarity). Interacts with the viral glycoprotein N (via C-terminus) (By similarity). Interacts with the viral glycoprotein C (via C-terminus) (By similarity).</text>
</comment>
<comment type="subcellular location">
    <subcellularLocation>
        <location evidence="2">Virion</location>
    </subcellularLocation>
    <subcellularLocation>
        <location evidence="2">Host cytoplasm</location>
        <location evidence="2">Host perinuclear region</location>
    </subcellularLocation>
    <subcellularLocation>
        <location evidence="2">Host Golgi apparatus</location>
        <location evidence="2">Host cis-Golgi network</location>
    </subcellularLocation>
    <text evidence="2">Internal protein of virus particle.</text>
</comment>
<comment type="domain">
    <text evidence="2 5">The N-terminus is required for chaperone activity and, in trimeric form, this region likely serves in high affinity vRNA panhandle recognition (By similarity). The N-terminus also contains a coiled coil region, which probably participates in but is insufficient to initiate N trimerization (By similarity). The YxxL motif is indispensable for the interaction with host MAP1LC3B (By similarity). The central region is involved in specific RNA-binding (By similarity). Has distinct cap- and RNA-binding sites so it can bind simultaneously both the vRNA and mRNA cap (By similarity).</text>
</comment>
<comment type="similarity">
    <text evidence="8">Belongs to the hantavirus nucleocapsid protein family.</text>
</comment>
<dbReference type="EC" id="3.1.-.-" evidence="5"/>
<dbReference type="EMBL" id="L11347">
    <property type="protein sequence ID" value="AAC37850.1"/>
    <property type="molecule type" value="Genomic_RNA"/>
</dbReference>
<dbReference type="SMR" id="P41270"/>
<dbReference type="GO" id="GO:0019029">
    <property type="term" value="C:helical viral capsid"/>
    <property type="evidence" value="ECO:0007669"/>
    <property type="project" value="UniProtKB-KW"/>
</dbReference>
<dbReference type="GO" id="GO:0044177">
    <property type="term" value="C:host cell Golgi apparatus"/>
    <property type="evidence" value="ECO:0007669"/>
    <property type="project" value="UniProtKB-SubCell"/>
</dbReference>
<dbReference type="GO" id="GO:0044220">
    <property type="term" value="C:host cell perinuclear region of cytoplasm"/>
    <property type="evidence" value="ECO:0007669"/>
    <property type="project" value="UniProtKB-SubCell"/>
</dbReference>
<dbReference type="GO" id="GO:1990904">
    <property type="term" value="C:ribonucleoprotein complex"/>
    <property type="evidence" value="ECO:0007669"/>
    <property type="project" value="UniProtKB-KW"/>
</dbReference>
<dbReference type="GO" id="GO:0019013">
    <property type="term" value="C:viral nucleocapsid"/>
    <property type="evidence" value="ECO:0007669"/>
    <property type="project" value="UniProtKB-KW"/>
</dbReference>
<dbReference type="GO" id="GO:0004519">
    <property type="term" value="F:endonuclease activity"/>
    <property type="evidence" value="ECO:0007669"/>
    <property type="project" value="UniProtKB-KW"/>
</dbReference>
<dbReference type="GO" id="GO:0003723">
    <property type="term" value="F:RNA binding"/>
    <property type="evidence" value="ECO:0007669"/>
    <property type="project" value="UniProtKB-KW"/>
</dbReference>
<dbReference type="Gene3D" id="1.20.58.90">
    <property type="match status" value="1"/>
</dbReference>
<dbReference type="InterPro" id="IPR002214">
    <property type="entry name" value="Hanta_nucleocap"/>
</dbReference>
<dbReference type="Pfam" id="PF00846">
    <property type="entry name" value="Hanta_nucleocap"/>
    <property type="match status" value="1"/>
</dbReference>
<dbReference type="PIRSF" id="PIRSF003949">
    <property type="entry name" value="N_HantaV"/>
    <property type="match status" value="1"/>
</dbReference>
<protein>
    <recommendedName>
        <fullName>Nucleoprotein</fullName>
        <ecNumber evidence="5">3.1.-.-</ecNumber>
    </recommendedName>
    <alternativeName>
        <fullName>Nucleocapsid protein</fullName>
        <shortName>Protein N</shortName>
    </alternativeName>
</protein>
<keyword id="KW-0167">Capsid protein</keyword>
<keyword id="KW-0143">Chaperone</keyword>
<keyword id="KW-0175">Coiled coil</keyword>
<keyword id="KW-0255">Endonuclease</keyword>
<keyword id="KW-1139">Helical capsid protein</keyword>
<keyword id="KW-1035">Host cytoplasm</keyword>
<keyword id="KW-1040">Host Golgi apparatus</keyword>
<keyword id="KW-0378">Hydrolase</keyword>
<keyword id="KW-0540">Nuclease</keyword>
<keyword id="KW-0687">Ribonucleoprotein</keyword>
<keyword id="KW-0694">RNA-binding</keyword>
<keyword id="KW-0543">Viral nucleoprotein</keyword>
<keyword id="KW-0946">Virion</keyword>
<reference key="1">
    <citation type="journal article" date="1993" name="Virus Res.">
        <title>Nucleotide and deduced amino acid sequences of the M and S genome segments of two Puumala virus isolates from Russia.</title>
        <authorList>
            <person name="Xiao S.Y."/>
            <person name="Spik K.W."/>
            <person name="Li D."/>
            <person name="Schmaljohn C.S."/>
        </authorList>
    </citation>
    <scope>NUCLEOTIDE SEQUENCE [GENOMIC RNA]</scope>
</reference>
<proteinExistence type="inferred from homology"/>
<gene>
    <name type="primary">N</name>
</gene>